<dbReference type="EMBL" id="HE600995">
    <property type="protein sequence ID" value="CAP34374.1"/>
    <property type="molecule type" value="Genomic_DNA"/>
</dbReference>
<dbReference type="SMR" id="Q614K9"/>
<dbReference type="FunCoup" id="Q614K9">
    <property type="interactions" value="1580"/>
</dbReference>
<dbReference type="STRING" id="6238.Q614K9"/>
<dbReference type="EnsemblMetazoa" id="CBG15955.1">
    <property type="protein sequence ID" value="CBG15955.1"/>
    <property type="gene ID" value="WBGene00036052"/>
</dbReference>
<dbReference type="KEGG" id="cbr:CBG_15955"/>
<dbReference type="CTD" id="8585350"/>
<dbReference type="WormBase" id="CBG15955">
    <property type="protein sequence ID" value="CBP10211"/>
    <property type="gene ID" value="WBGene00036052"/>
    <property type="gene designation" value="Cbr-mdt-1.2"/>
</dbReference>
<dbReference type="eggNOG" id="ENOG502TFH1">
    <property type="taxonomic scope" value="Eukaryota"/>
</dbReference>
<dbReference type="HOGENOM" id="CLU_521997_0_0_1"/>
<dbReference type="InParanoid" id="Q614K9"/>
<dbReference type="OMA" id="WEEPSFY"/>
<dbReference type="Proteomes" id="UP000008549">
    <property type="component" value="Unassembled WGS sequence"/>
</dbReference>
<dbReference type="GO" id="GO:0005634">
    <property type="term" value="C:nucleus"/>
    <property type="evidence" value="ECO:0007669"/>
    <property type="project" value="UniProtKB-SubCell"/>
</dbReference>
<organism>
    <name type="scientific">Caenorhabditis briggsae</name>
    <dbReference type="NCBI Taxonomy" id="6238"/>
    <lineage>
        <taxon>Eukaryota</taxon>
        <taxon>Metazoa</taxon>
        <taxon>Ecdysozoa</taxon>
        <taxon>Nematoda</taxon>
        <taxon>Chromadorea</taxon>
        <taxon>Rhabditida</taxon>
        <taxon>Rhabditina</taxon>
        <taxon>Rhabditomorpha</taxon>
        <taxon>Rhabditoidea</taxon>
        <taxon>Rhabditidae</taxon>
        <taxon>Peloderinae</taxon>
        <taxon>Caenorhabditis</taxon>
    </lineage>
</organism>
<name>MED1L_CAEBR</name>
<sequence length="523" mass="60356">MPRDIPATKGVYLLERVTNKEINLENIDEEMRMEQVRQAGAKLDWASFGQAVRRNLQEKRNTIDADGRIDVLKSLAFMKTKLPIEADAPMEEKIRILAESLGCTHVRTTRGWTITKPEELNVDLTIKNGEVDTVVLSFWEEAAFYSGEATKMLHKGEWSELRDRLASMLAVYNKDLDRNDRKTCKAAMDVLGSMLKTMNADEMYTSIQNNNYGYYLHRSDLRQGRLYYNVEPLYRRVRSKHHTYSLQKEDWDILPFFEFSFVPSDSVHAFPEHNPYGEWKETGSAKAAVCLKLSKGVLVSEPTRRKLHEISARSTTIQCYTNCYRYLTGSVLIKDNLKMITQFPGECTQHHYTIDRSSFTSEGDSVITEIYLKRLQDFHKVIEILRKEAMHISIWESVLADCYELQGLEERVVPAINMFVNLSRDMITVRFMTKYAPIRVCIRDGVWIEAKVEVVNDQTGAKVADRVDELLTRKLNETWSIPIMLTFAVSGEDCALEQMKVPLREENPETKLPTPTKIIVHKN</sequence>
<accession>Q614K9</accession>
<accession>A8XNE3</accession>
<gene>
    <name type="primary">mdt-1.2</name>
    <name type="ORF">CBG15955</name>
</gene>
<keyword id="KW-0010">Activator</keyword>
<keyword id="KW-0539">Nucleus</keyword>
<keyword id="KW-1185">Reference proteome</keyword>
<keyword id="KW-0804">Transcription</keyword>
<keyword id="KW-0805">Transcription regulation</keyword>
<protein>
    <recommendedName>
        <fullName>Mediator of RNA polymerase II transcription subunit 1.2</fullName>
    </recommendedName>
    <alternativeName>
        <fullName>Mediator complex subunit 1.2</fullName>
    </alternativeName>
</protein>
<comment type="function">
    <text evidence="1">Component of the Mediator complex, a coactivator involved in the regulated transcription of nearly all RNA polymerase II-dependent genes. Mediator functions as a bridge to convey information from gene-specific regulatory proteins to the basal RNA polymerase II transcription machinery. Mediator is recruited to promoters by direct interactions with regulatory proteins and serves as a scaffold for the assembly of a functional preinitiation complex with RNA polymerase II and the general transcription factors (By similarity).</text>
</comment>
<comment type="subunit">
    <text evidence="1">Component of the Mediator complex.</text>
</comment>
<comment type="subcellular location">
    <subcellularLocation>
        <location evidence="1">Nucleus</location>
    </subcellularLocation>
</comment>
<comment type="similarity">
    <text evidence="2">Belongs to the Mediator complex subunit 1 family.</text>
</comment>
<evidence type="ECO:0000250" key="1"/>
<evidence type="ECO:0000305" key="2"/>
<feature type="chain" id="PRO_0000302026" description="Mediator of RNA polymerase II transcription subunit 1.2">
    <location>
        <begin position="1"/>
        <end position="523"/>
    </location>
</feature>
<proteinExistence type="inferred from homology"/>
<reference key="1">
    <citation type="journal article" date="2003" name="PLoS Biol.">
        <title>The genome sequence of Caenorhabditis briggsae: a platform for comparative genomics.</title>
        <authorList>
            <person name="Stein L.D."/>
            <person name="Bao Z."/>
            <person name="Blasiar D."/>
            <person name="Blumenthal T."/>
            <person name="Brent M.R."/>
            <person name="Chen N."/>
            <person name="Chinwalla A."/>
            <person name="Clarke L."/>
            <person name="Clee C."/>
            <person name="Coghlan A."/>
            <person name="Coulson A."/>
            <person name="D'Eustachio P."/>
            <person name="Fitch D.H.A."/>
            <person name="Fulton L.A."/>
            <person name="Fulton R.E."/>
            <person name="Griffiths-Jones S."/>
            <person name="Harris T.W."/>
            <person name="Hillier L.W."/>
            <person name="Kamath R."/>
            <person name="Kuwabara P.E."/>
            <person name="Mardis E.R."/>
            <person name="Marra M.A."/>
            <person name="Miner T.L."/>
            <person name="Minx P."/>
            <person name="Mullikin J.C."/>
            <person name="Plumb R.W."/>
            <person name="Rogers J."/>
            <person name="Schein J.E."/>
            <person name="Sohrmann M."/>
            <person name="Spieth J."/>
            <person name="Stajich J.E."/>
            <person name="Wei C."/>
            <person name="Willey D."/>
            <person name="Wilson R.K."/>
            <person name="Durbin R.M."/>
            <person name="Waterston R.H."/>
        </authorList>
    </citation>
    <scope>NUCLEOTIDE SEQUENCE [LARGE SCALE GENOMIC DNA]</scope>
    <source>
        <strain>AF16</strain>
    </source>
</reference>